<evidence type="ECO:0000255" key="1">
    <source>
        <dbReference type="HAMAP-Rule" id="MF_00420"/>
    </source>
</evidence>
<protein>
    <recommendedName>
        <fullName evidence="1">Phosphoribosylformylglycinamidine synthase subunit PurL</fullName>
        <shortName evidence="1">FGAM synthase</shortName>
        <ecNumber evidence="1">6.3.5.3</ecNumber>
    </recommendedName>
    <alternativeName>
        <fullName evidence="1">Formylglycinamide ribonucleotide amidotransferase subunit II</fullName>
        <shortName evidence="1">FGAR amidotransferase II</shortName>
        <shortName evidence="1">FGAR-AT II</shortName>
    </alternativeName>
    <alternativeName>
        <fullName evidence="1">Glutamine amidotransferase PurL</fullName>
    </alternativeName>
    <alternativeName>
        <fullName evidence="1">Phosphoribosylformylglycinamidine synthase subunit II</fullName>
    </alternativeName>
</protein>
<sequence>MSLMLEPNPTQIKEERIYAEMGLTDEEFAMVEKILGRLPNYTETGLFSVMWSEHCSYKNSKPVLRKFPTTGERVLQGPGEGAGIVDIGDNQAVVFKMESHNHPSAIEPYQGAATGVGGIIRDVFSMGARPVALLNSLRFGELQSPRVKYLFEEVVAGIAGYGNCIGIPTVGGEVQFDPCYEGNPLVNAMCVGLINHEDIKKGQAHGAGNTVMYVGASTGRDGIHGATFASEELSESSEAKRPAVQVGDPFMEKLLIEACLELIQSDALVGIQDMGAAGLTSSSAEMASKAGMGIEMYLDDVPQRETGMTPYEMMLSESQERMLIVVKKGREQEIVDLFEKYDLAAVTMGKVTEDKMLRLFHKGEKVAEVPADALAEEAPIYHKPSKEAAYFAEFQAMKMETPKVENYKETLFALLQQPTIASKEWVYDQYDYQVRTSTVVTPGSDAAVVRVRGTEKGLAMTTDCNSRYIYLDPEMGGKIAVAEAARNIVCSGGEPLAITDCLNFGNPEKPEIFWQIEKSVDGMSEACRTLQTPVIGGNVSMYNERSGEAVYPTPTVGMVGLVHDLKHVTTQEFKQAGDLVYVIGETKAEFGGSELQKMIHGKIFGQSPSIDLDVELKRQKQVLEAIQAGLVQSAHDVAEGGLAVAISESAIGAKGLGATVKLDGEATAALFAESQSRFVITVKRENKEAFEKVVEAIQVGEVTSTNEVTIHNEENEVLLTANVDEMRKAWKGAIPCLLK</sequence>
<proteinExistence type="inferred from homology"/>
<gene>
    <name evidence="1" type="primary">purL</name>
    <name type="ordered locus">BC_0329</name>
</gene>
<name>PURL_BACCR</name>
<keyword id="KW-0067">ATP-binding</keyword>
<keyword id="KW-0963">Cytoplasm</keyword>
<keyword id="KW-0436">Ligase</keyword>
<keyword id="KW-0460">Magnesium</keyword>
<keyword id="KW-0479">Metal-binding</keyword>
<keyword id="KW-0547">Nucleotide-binding</keyword>
<keyword id="KW-0658">Purine biosynthesis</keyword>
<keyword id="KW-1185">Reference proteome</keyword>
<organism>
    <name type="scientific">Bacillus cereus (strain ATCC 14579 / DSM 31 / CCUG 7414 / JCM 2152 / NBRC 15305 / NCIMB 9373 / NCTC 2599 / NRRL B-3711)</name>
    <dbReference type="NCBI Taxonomy" id="226900"/>
    <lineage>
        <taxon>Bacteria</taxon>
        <taxon>Bacillati</taxon>
        <taxon>Bacillota</taxon>
        <taxon>Bacilli</taxon>
        <taxon>Bacillales</taxon>
        <taxon>Bacillaceae</taxon>
        <taxon>Bacillus</taxon>
        <taxon>Bacillus cereus group</taxon>
    </lineage>
</organism>
<dbReference type="EC" id="6.3.5.3" evidence="1"/>
<dbReference type="EMBL" id="AE016877">
    <property type="protein sequence ID" value="AAP07369.1"/>
    <property type="molecule type" value="Genomic_DNA"/>
</dbReference>
<dbReference type="RefSeq" id="NP_830168.1">
    <property type="nucleotide sequence ID" value="NC_004722.1"/>
</dbReference>
<dbReference type="RefSeq" id="WP_000055555.1">
    <property type="nucleotide sequence ID" value="NC_004722.1"/>
</dbReference>
<dbReference type="SMR" id="Q81IQ3"/>
<dbReference type="STRING" id="226900.BC_0329"/>
<dbReference type="MetOSite" id="Q81IQ3"/>
<dbReference type="KEGG" id="bce:BC0329"/>
<dbReference type="PATRIC" id="fig|226900.8.peg.301"/>
<dbReference type="HOGENOM" id="CLU_003100_0_1_9"/>
<dbReference type="OrthoDB" id="9804441at2"/>
<dbReference type="UniPathway" id="UPA00074">
    <property type="reaction ID" value="UER00128"/>
</dbReference>
<dbReference type="Proteomes" id="UP000001417">
    <property type="component" value="Chromosome"/>
</dbReference>
<dbReference type="GO" id="GO:0005737">
    <property type="term" value="C:cytoplasm"/>
    <property type="evidence" value="ECO:0007669"/>
    <property type="project" value="UniProtKB-SubCell"/>
</dbReference>
<dbReference type="GO" id="GO:0005524">
    <property type="term" value="F:ATP binding"/>
    <property type="evidence" value="ECO:0007669"/>
    <property type="project" value="UniProtKB-UniRule"/>
</dbReference>
<dbReference type="GO" id="GO:0000287">
    <property type="term" value="F:magnesium ion binding"/>
    <property type="evidence" value="ECO:0007669"/>
    <property type="project" value="UniProtKB-UniRule"/>
</dbReference>
<dbReference type="GO" id="GO:0004642">
    <property type="term" value="F:phosphoribosylformylglycinamidine synthase activity"/>
    <property type="evidence" value="ECO:0000318"/>
    <property type="project" value="GO_Central"/>
</dbReference>
<dbReference type="GO" id="GO:0006189">
    <property type="term" value="P:'de novo' IMP biosynthetic process"/>
    <property type="evidence" value="ECO:0007669"/>
    <property type="project" value="UniProtKB-UniRule"/>
</dbReference>
<dbReference type="GO" id="GO:0006164">
    <property type="term" value="P:purine nucleotide biosynthetic process"/>
    <property type="evidence" value="ECO:0000318"/>
    <property type="project" value="GO_Central"/>
</dbReference>
<dbReference type="CDD" id="cd02203">
    <property type="entry name" value="PurL_repeat1"/>
    <property type="match status" value="1"/>
</dbReference>
<dbReference type="CDD" id="cd02204">
    <property type="entry name" value="PurL_repeat2"/>
    <property type="match status" value="1"/>
</dbReference>
<dbReference type="FunFam" id="3.30.1330.10:FF:000004">
    <property type="entry name" value="Phosphoribosylformylglycinamidine synthase subunit PurL"/>
    <property type="match status" value="1"/>
</dbReference>
<dbReference type="FunFam" id="3.30.1330.10:FF:000011">
    <property type="entry name" value="Phosphoribosylformylglycinamidine synthase subunit PurL"/>
    <property type="match status" value="1"/>
</dbReference>
<dbReference type="FunFam" id="3.90.650.10:FF:000009">
    <property type="entry name" value="Phosphoribosylformylglycinamidine synthase subunit PurL"/>
    <property type="match status" value="1"/>
</dbReference>
<dbReference type="FunFam" id="3.90.650.10:FF:000013">
    <property type="entry name" value="Phosphoribosylformylglycinamidine synthase subunit PurL"/>
    <property type="match status" value="1"/>
</dbReference>
<dbReference type="Gene3D" id="3.90.650.10">
    <property type="entry name" value="PurM-like C-terminal domain"/>
    <property type="match status" value="2"/>
</dbReference>
<dbReference type="Gene3D" id="3.30.1330.10">
    <property type="entry name" value="PurM-like, N-terminal domain"/>
    <property type="match status" value="2"/>
</dbReference>
<dbReference type="HAMAP" id="MF_00420">
    <property type="entry name" value="PurL_2"/>
    <property type="match status" value="1"/>
</dbReference>
<dbReference type="InterPro" id="IPR010074">
    <property type="entry name" value="PRibForGlyAmidine_synth_PurL"/>
</dbReference>
<dbReference type="InterPro" id="IPR041609">
    <property type="entry name" value="PurL_linker"/>
</dbReference>
<dbReference type="InterPro" id="IPR010918">
    <property type="entry name" value="PurM-like_C_dom"/>
</dbReference>
<dbReference type="InterPro" id="IPR036676">
    <property type="entry name" value="PurM-like_C_sf"/>
</dbReference>
<dbReference type="InterPro" id="IPR016188">
    <property type="entry name" value="PurM-like_N"/>
</dbReference>
<dbReference type="InterPro" id="IPR036921">
    <property type="entry name" value="PurM-like_N_sf"/>
</dbReference>
<dbReference type="NCBIfam" id="TIGR01736">
    <property type="entry name" value="FGAM_synth_II"/>
    <property type="match status" value="1"/>
</dbReference>
<dbReference type="NCBIfam" id="NF002290">
    <property type="entry name" value="PRK01213.1"/>
    <property type="match status" value="1"/>
</dbReference>
<dbReference type="PANTHER" id="PTHR43555">
    <property type="entry name" value="PHOSPHORIBOSYLFORMYLGLYCINAMIDINE SYNTHASE SUBUNIT PURL"/>
    <property type="match status" value="1"/>
</dbReference>
<dbReference type="PANTHER" id="PTHR43555:SF1">
    <property type="entry name" value="PHOSPHORIBOSYLFORMYLGLYCINAMIDINE SYNTHASE SUBUNIT PURL"/>
    <property type="match status" value="1"/>
</dbReference>
<dbReference type="Pfam" id="PF00586">
    <property type="entry name" value="AIRS"/>
    <property type="match status" value="2"/>
</dbReference>
<dbReference type="Pfam" id="PF02769">
    <property type="entry name" value="AIRS_C"/>
    <property type="match status" value="2"/>
</dbReference>
<dbReference type="Pfam" id="PF18072">
    <property type="entry name" value="FGAR-AT_linker"/>
    <property type="match status" value="1"/>
</dbReference>
<dbReference type="PIRSF" id="PIRSF001587">
    <property type="entry name" value="FGAM_synthase_II"/>
    <property type="match status" value="1"/>
</dbReference>
<dbReference type="SUPFAM" id="SSF56042">
    <property type="entry name" value="PurM C-terminal domain-like"/>
    <property type="match status" value="2"/>
</dbReference>
<dbReference type="SUPFAM" id="SSF55326">
    <property type="entry name" value="PurM N-terminal domain-like"/>
    <property type="match status" value="2"/>
</dbReference>
<feature type="chain" id="PRO_0000100434" description="Phosphoribosylformylglycinamidine synthase subunit PurL">
    <location>
        <begin position="1"/>
        <end position="739"/>
    </location>
</feature>
<feature type="active site" evidence="1">
    <location>
        <position position="54"/>
    </location>
</feature>
<feature type="active site" description="Proton acceptor" evidence="1">
    <location>
        <position position="100"/>
    </location>
</feature>
<feature type="binding site" evidence="1">
    <location>
        <position position="57"/>
    </location>
    <ligand>
        <name>ATP</name>
        <dbReference type="ChEBI" id="CHEBI:30616"/>
    </ligand>
</feature>
<feature type="binding site" evidence="1">
    <location>
        <position position="96"/>
    </location>
    <ligand>
        <name>ATP</name>
        <dbReference type="ChEBI" id="CHEBI:30616"/>
    </ligand>
</feature>
<feature type="binding site" evidence="1">
    <location>
        <position position="98"/>
    </location>
    <ligand>
        <name>Mg(2+)</name>
        <dbReference type="ChEBI" id="CHEBI:18420"/>
        <label>1</label>
    </ligand>
</feature>
<feature type="binding site" evidence="1">
    <location>
        <begin position="99"/>
        <end position="102"/>
    </location>
    <ligand>
        <name>substrate</name>
    </ligand>
</feature>
<feature type="binding site" evidence="1">
    <location>
        <position position="121"/>
    </location>
    <ligand>
        <name>substrate</name>
    </ligand>
</feature>
<feature type="binding site" evidence="1">
    <location>
        <position position="122"/>
    </location>
    <ligand>
        <name>Mg(2+)</name>
        <dbReference type="ChEBI" id="CHEBI:18420"/>
        <label>2</label>
    </ligand>
</feature>
<feature type="binding site" evidence="1">
    <location>
        <position position="245"/>
    </location>
    <ligand>
        <name>substrate</name>
    </ligand>
</feature>
<feature type="binding site" evidence="1">
    <location>
        <position position="273"/>
    </location>
    <ligand>
        <name>Mg(2+)</name>
        <dbReference type="ChEBI" id="CHEBI:18420"/>
        <label>2</label>
    </ligand>
</feature>
<feature type="binding site" evidence="1">
    <location>
        <begin position="317"/>
        <end position="319"/>
    </location>
    <ligand>
        <name>substrate</name>
    </ligand>
</feature>
<feature type="binding site" evidence="1">
    <location>
        <position position="500"/>
    </location>
    <ligand>
        <name>ATP</name>
        <dbReference type="ChEBI" id="CHEBI:30616"/>
    </ligand>
</feature>
<feature type="binding site" evidence="1">
    <location>
        <position position="537"/>
    </location>
    <ligand>
        <name>ATP</name>
        <dbReference type="ChEBI" id="CHEBI:30616"/>
    </ligand>
</feature>
<feature type="binding site" evidence="1">
    <location>
        <position position="538"/>
    </location>
    <ligand>
        <name>Mg(2+)</name>
        <dbReference type="ChEBI" id="CHEBI:18420"/>
        <label>1</label>
    </ligand>
</feature>
<feature type="binding site" evidence="1">
    <location>
        <position position="540"/>
    </location>
    <ligand>
        <name>substrate</name>
    </ligand>
</feature>
<reference key="1">
    <citation type="journal article" date="2003" name="Nature">
        <title>Genome sequence of Bacillus cereus and comparative analysis with Bacillus anthracis.</title>
        <authorList>
            <person name="Ivanova N."/>
            <person name="Sorokin A."/>
            <person name="Anderson I."/>
            <person name="Galleron N."/>
            <person name="Candelon B."/>
            <person name="Kapatral V."/>
            <person name="Bhattacharyya A."/>
            <person name="Reznik G."/>
            <person name="Mikhailova N."/>
            <person name="Lapidus A."/>
            <person name="Chu L."/>
            <person name="Mazur M."/>
            <person name="Goltsman E."/>
            <person name="Larsen N."/>
            <person name="D'Souza M."/>
            <person name="Walunas T."/>
            <person name="Grechkin Y."/>
            <person name="Pusch G."/>
            <person name="Haselkorn R."/>
            <person name="Fonstein M."/>
            <person name="Ehrlich S.D."/>
            <person name="Overbeek R."/>
            <person name="Kyrpides N.C."/>
        </authorList>
    </citation>
    <scope>NUCLEOTIDE SEQUENCE [LARGE SCALE GENOMIC DNA]</scope>
    <source>
        <strain>ATCC 14579 / DSM 31 / CCUG 7414 / JCM 2152 / NBRC 15305 / NCIMB 9373 / NCTC 2599 / NRRL B-3711</strain>
    </source>
</reference>
<accession>Q81IQ3</accession>
<comment type="function">
    <text evidence="1">Part of the phosphoribosylformylglycinamidine synthase complex involved in the purines biosynthetic pathway. Catalyzes the ATP-dependent conversion of formylglycinamide ribonucleotide (FGAR) and glutamine to yield formylglycinamidine ribonucleotide (FGAM) and glutamate. The FGAM synthase complex is composed of three subunits. PurQ produces an ammonia molecule by converting glutamine to glutamate. PurL transfers the ammonia molecule to FGAR to form FGAM in an ATP-dependent manner. PurS interacts with PurQ and PurL and is thought to assist in the transfer of the ammonia molecule from PurQ to PurL.</text>
</comment>
<comment type="catalytic activity">
    <reaction evidence="1">
        <text>N(2)-formyl-N(1)-(5-phospho-beta-D-ribosyl)glycinamide + L-glutamine + ATP + H2O = 2-formamido-N(1)-(5-O-phospho-beta-D-ribosyl)acetamidine + L-glutamate + ADP + phosphate + H(+)</text>
        <dbReference type="Rhea" id="RHEA:17129"/>
        <dbReference type="ChEBI" id="CHEBI:15377"/>
        <dbReference type="ChEBI" id="CHEBI:15378"/>
        <dbReference type="ChEBI" id="CHEBI:29985"/>
        <dbReference type="ChEBI" id="CHEBI:30616"/>
        <dbReference type="ChEBI" id="CHEBI:43474"/>
        <dbReference type="ChEBI" id="CHEBI:58359"/>
        <dbReference type="ChEBI" id="CHEBI:147286"/>
        <dbReference type="ChEBI" id="CHEBI:147287"/>
        <dbReference type="ChEBI" id="CHEBI:456216"/>
        <dbReference type="EC" id="6.3.5.3"/>
    </reaction>
</comment>
<comment type="pathway">
    <text evidence="1">Purine metabolism; IMP biosynthesis via de novo pathway; 5-amino-1-(5-phospho-D-ribosyl)imidazole from N(2)-formyl-N(1)-(5-phospho-D-ribosyl)glycinamide: step 1/2.</text>
</comment>
<comment type="subunit">
    <text evidence="1">Monomer. Part of the FGAM synthase complex composed of 1 PurL, 1 PurQ and 2 PurS subunits.</text>
</comment>
<comment type="subcellular location">
    <subcellularLocation>
        <location evidence="1">Cytoplasm</location>
    </subcellularLocation>
</comment>
<comment type="similarity">
    <text evidence="1">Belongs to the FGAMS family.</text>
</comment>